<sequence length="217" mass="23596">MTTGADADLIERGRKLFAGDWQFIWASPSIETLPPMAGVEVAFAGRSNVGKSSLINALTGRGTLARTSRTPGRTQELIFFEGPKDADVRLVDMPGYGFASAPKARIASWTSLIHKFLLGRASLARVYVLIDSRHGIKDIDQAILTTLDRSAVSYQIVLTKADEVKATEMAERTEATRTLLAKHPAAFPDVLVTSSRTGYGVPELRAAMARLIGEHQR</sequence>
<name>ENGB_NITHX</name>
<organism>
    <name type="scientific">Nitrobacter hamburgensis (strain DSM 10229 / NCIMB 13809 / X14)</name>
    <dbReference type="NCBI Taxonomy" id="323097"/>
    <lineage>
        <taxon>Bacteria</taxon>
        <taxon>Pseudomonadati</taxon>
        <taxon>Pseudomonadota</taxon>
        <taxon>Alphaproteobacteria</taxon>
        <taxon>Hyphomicrobiales</taxon>
        <taxon>Nitrobacteraceae</taxon>
        <taxon>Nitrobacter</taxon>
    </lineage>
</organism>
<proteinExistence type="inferred from homology"/>
<dbReference type="EMBL" id="CP000319">
    <property type="protein sequence ID" value="ABE64428.1"/>
    <property type="molecule type" value="Genomic_DNA"/>
</dbReference>
<dbReference type="RefSeq" id="WP_011512067.1">
    <property type="nucleotide sequence ID" value="NC_007964.1"/>
</dbReference>
<dbReference type="SMR" id="Q1QH69"/>
<dbReference type="STRING" id="323097.Nham_3702"/>
<dbReference type="KEGG" id="nha:Nham_3702"/>
<dbReference type="eggNOG" id="COG0218">
    <property type="taxonomic scope" value="Bacteria"/>
</dbReference>
<dbReference type="HOGENOM" id="CLU_033732_2_0_5"/>
<dbReference type="OrthoDB" id="9804921at2"/>
<dbReference type="Proteomes" id="UP000001953">
    <property type="component" value="Chromosome"/>
</dbReference>
<dbReference type="GO" id="GO:0005829">
    <property type="term" value="C:cytosol"/>
    <property type="evidence" value="ECO:0007669"/>
    <property type="project" value="TreeGrafter"/>
</dbReference>
<dbReference type="GO" id="GO:0005525">
    <property type="term" value="F:GTP binding"/>
    <property type="evidence" value="ECO:0007669"/>
    <property type="project" value="UniProtKB-UniRule"/>
</dbReference>
<dbReference type="GO" id="GO:0046872">
    <property type="term" value="F:metal ion binding"/>
    <property type="evidence" value="ECO:0007669"/>
    <property type="project" value="UniProtKB-KW"/>
</dbReference>
<dbReference type="GO" id="GO:0000917">
    <property type="term" value="P:division septum assembly"/>
    <property type="evidence" value="ECO:0007669"/>
    <property type="project" value="UniProtKB-KW"/>
</dbReference>
<dbReference type="CDD" id="cd01876">
    <property type="entry name" value="YihA_EngB"/>
    <property type="match status" value="1"/>
</dbReference>
<dbReference type="Gene3D" id="3.40.50.300">
    <property type="entry name" value="P-loop containing nucleotide triphosphate hydrolases"/>
    <property type="match status" value="1"/>
</dbReference>
<dbReference type="HAMAP" id="MF_00321">
    <property type="entry name" value="GTPase_EngB"/>
    <property type="match status" value="1"/>
</dbReference>
<dbReference type="InterPro" id="IPR030393">
    <property type="entry name" value="G_ENGB_dom"/>
</dbReference>
<dbReference type="InterPro" id="IPR006073">
    <property type="entry name" value="GTP-bd"/>
</dbReference>
<dbReference type="InterPro" id="IPR019987">
    <property type="entry name" value="GTP-bd_ribosome_bio_YsxC"/>
</dbReference>
<dbReference type="InterPro" id="IPR027417">
    <property type="entry name" value="P-loop_NTPase"/>
</dbReference>
<dbReference type="NCBIfam" id="TIGR03598">
    <property type="entry name" value="GTPase_YsxC"/>
    <property type="match status" value="1"/>
</dbReference>
<dbReference type="PANTHER" id="PTHR11649:SF13">
    <property type="entry name" value="ENGB-TYPE G DOMAIN-CONTAINING PROTEIN"/>
    <property type="match status" value="1"/>
</dbReference>
<dbReference type="PANTHER" id="PTHR11649">
    <property type="entry name" value="MSS1/TRME-RELATED GTP-BINDING PROTEIN"/>
    <property type="match status" value="1"/>
</dbReference>
<dbReference type="Pfam" id="PF01926">
    <property type="entry name" value="MMR_HSR1"/>
    <property type="match status" value="1"/>
</dbReference>
<dbReference type="SUPFAM" id="SSF52540">
    <property type="entry name" value="P-loop containing nucleoside triphosphate hydrolases"/>
    <property type="match status" value="1"/>
</dbReference>
<dbReference type="PROSITE" id="PS51706">
    <property type="entry name" value="G_ENGB"/>
    <property type="match status" value="1"/>
</dbReference>
<protein>
    <recommendedName>
        <fullName evidence="1">Probable GTP-binding protein EngB</fullName>
    </recommendedName>
</protein>
<gene>
    <name evidence="1" type="primary">engB</name>
    <name type="ordered locus">Nham_3702</name>
</gene>
<accession>Q1QH69</accession>
<keyword id="KW-0131">Cell cycle</keyword>
<keyword id="KW-0132">Cell division</keyword>
<keyword id="KW-0342">GTP-binding</keyword>
<keyword id="KW-0460">Magnesium</keyword>
<keyword id="KW-0479">Metal-binding</keyword>
<keyword id="KW-0547">Nucleotide-binding</keyword>
<keyword id="KW-1185">Reference proteome</keyword>
<keyword id="KW-0717">Septation</keyword>
<feature type="chain" id="PRO_0000266904" description="Probable GTP-binding protein EngB">
    <location>
        <begin position="1"/>
        <end position="217"/>
    </location>
</feature>
<feature type="domain" description="EngB-type G" evidence="1">
    <location>
        <begin position="37"/>
        <end position="214"/>
    </location>
</feature>
<feature type="binding site" evidence="1">
    <location>
        <begin position="45"/>
        <end position="52"/>
    </location>
    <ligand>
        <name>GTP</name>
        <dbReference type="ChEBI" id="CHEBI:37565"/>
    </ligand>
</feature>
<feature type="binding site" evidence="1">
    <location>
        <position position="52"/>
    </location>
    <ligand>
        <name>Mg(2+)</name>
        <dbReference type="ChEBI" id="CHEBI:18420"/>
    </ligand>
</feature>
<feature type="binding site" evidence="1">
    <location>
        <begin position="72"/>
        <end position="76"/>
    </location>
    <ligand>
        <name>GTP</name>
        <dbReference type="ChEBI" id="CHEBI:37565"/>
    </ligand>
</feature>
<feature type="binding site" evidence="1">
    <location>
        <position position="74"/>
    </location>
    <ligand>
        <name>Mg(2+)</name>
        <dbReference type="ChEBI" id="CHEBI:18420"/>
    </ligand>
</feature>
<feature type="binding site" evidence="1">
    <location>
        <begin position="92"/>
        <end position="95"/>
    </location>
    <ligand>
        <name>GTP</name>
        <dbReference type="ChEBI" id="CHEBI:37565"/>
    </ligand>
</feature>
<feature type="binding site" evidence="1">
    <location>
        <begin position="159"/>
        <end position="162"/>
    </location>
    <ligand>
        <name>GTP</name>
        <dbReference type="ChEBI" id="CHEBI:37565"/>
    </ligand>
</feature>
<feature type="binding site" evidence="1">
    <location>
        <begin position="193"/>
        <end position="195"/>
    </location>
    <ligand>
        <name>GTP</name>
        <dbReference type="ChEBI" id="CHEBI:37565"/>
    </ligand>
</feature>
<comment type="function">
    <text evidence="1">Necessary for normal cell division and for the maintenance of normal septation.</text>
</comment>
<comment type="cofactor">
    <cofactor evidence="1">
        <name>Mg(2+)</name>
        <dbReference type="ChEBI" id="CHEBI:18420"/>
    </cofactor>
</comment>
<comment type="similarity">
    <text evidence="1">Belongs to the TRAFAC class TrmE-Era-EngA-EngB-Septin-like GTPase superfamily. EngB GTPase family.</text>
</comment>
<reference key="1">
    <citation type="submission" date="2006-03" db="EMBL/GenBank/DDBJ databases">
        <title>Complete sequence of chromosome of Nitrobacter hamburgensis X14.</title>
        <authorList>
            <consortium name="US DOE Joint Genome Institute"/>
            <person name="Copeland A."/>
            <person name="Lucas S."/>
            <person name="Lapidus A."/>
            <person name="Barry K."/>
            <person name="Detter J.C."/>
            <person name="Glavina del Rio T."/>
            <person name="Hammon N."/>
            <person name="Israni S."/>
            <person name="Dalin E."/>
            <person name="Tice H."/>
            <person name="Pitluck S."/>
            <person name="Chain P."/>
            <person name="Malfatti S."/>
            <person name="Shin M."/>
            <person name="Vergez L."/>
            <person name="Schmutz J."/>
            <person name="Larimer F."/>
            <person name="Land M."/>
            <person name="Hauser L."/>
            <person name="Kyrpides N."/>
            <person name="Ivanova N."/>
            <person name="Ward B."/>
            <person name="Arp D."/>
            <person name="Klotz M."/>
            <person name="Stein L."/>
            <person name="O'Mullan G."/>
            <person name="Starkenburg S."/>
            <person name="Sayavedra L."/>
            <person name="Poret-Peterson A.T."/>
            <person name="Gentry M.E."/>
            <person name="Bruce D."/>
            <person name="Richardson P."/>
        </authorList>
    </citation>
    <scope>NUCLEOTIDE SEQUENCE [LARGE SCALE GENOMIC DNA]</scope>
    <source>
        <strain>DSM 10229 / NCIMB 13809 / X14</strain>
    </source>
</reference>
<evidence type="ECO:0000255" key="1">
    <source>
        <dbReference type="HAMAP-Rule" id="MF_00321"/>
    </source>
</evidence>